<protein>
    <recommendedName>
        <fullName evidence="10">Beta-1,4 N-acetylgalactosaminyltransferase 1</fullName>
        <ecNumber evidence="8">2.4.1.92</ecNumber>
    </recommendedName>
    <alternativeName>
        <fullName>(N-acetylneuraminyl)-galactosylglucosylceramide</fullName>
    </alternativeName>
    <alternativeName>
        <fullName evidence="9">GM2/GD2 synthase</fullName>
    </alternativeName>
    <alternativeName>
        <fullName>GalNAc-T</fullName>
    </alternativeName>
</protein>
<accession>Q09200</accession>
<evidence type="ECO:0000250" key="1"/>
<evidence type="ECO:0000250" key="2">
    <source>
        <dbReference type="UniProtKB" id="Q00973"/>
    </source>
</evidence>
<evidence type="ECO:0000250" key="3">
    <source>
        <dbReference type="UniProtKB" id="Q10468"/>
    </source>
</evidence>
<evidence type="ECO:0000255" key="4"/>
<evidence type="ECO:0000269" key="5">
    <source>
    </source>
</evidence>
<evidence type="ECO:0000269" key="6">
    <source>
    </source>
</evidence>
<evidence type="ECO:0000269" key="7">
    <source>
    </source>
</evidence>
<evidence type="ECO:0000269" key="8">
    <source>
    </source>
</evidence>
<evidence type="ECO:0000303" key="9">
    <source>
    </source>
</evidence>
<evidence type="ECO:0000305" key="10"/>
<evidence type="ECO:0000305" key="11">
    <source>
    </source>
</evidence>
<evidence type="ECO:0000312" key="12">
    <source>
        <dbReference type="MGI" id="MGI:1342057"/>
    </source>
</evidence>
<sequence length="533" mass="59212">MRLDRRALYALVLLLACASLGLLYSSTRNAPSLPNPLALWSPPQGPPRLDLLDLAPEPRYAHIPVRIKEQVVGLLAQNNCSCESKGGSLPLPFLRQVRAVDLTKAFDAEELRAVSVAREQEYQAFLARSRSLADQLLIAPANSPLQYPLQGVEVQPLRSILVPGLSLQEASVQEIYQVNLSASLGTWDVAGEVTGVTLTGEGQPDLTLASPVLDKLNRQLQLVTYSSRSYQANTADTVRFSTKGHEVAFTILVRHPPNPRLYPPSSLPQGAEYNISALVTIATKTFLRYDRLRTLIASIRRFYPTVTIVIADDSDKPERISDPHVEHYFMPFGKGWFAGRNLAVSQVTTKYVLWVDDDFVFTARTRLEKLVDVLEKTPLDLVGGAVREISGYATTYRQLLSVEPGAPGLGNCFRQKQGFHHELVGFPSCVVTDGVVNFFLARTDKVRQVGFDPRLNRVAHLEFFLDGLGFLRVGSCSDVVVDHASKVKLPWTAKDPGAETYARYRYPGSLDQSQVAKHRLLFFKHRLQCMTAE</sequence>
<proteinExistence type="evidence at protein level"/>
<gene>
    <name evidence="12" type="primary">B4galnt1</name>
    <name type="synonym">Galgt</name>
    <name type="synonym">Galgt1</name>
    <name type="synonym">Ggm2</name>
</gene>
<reference key="1">
    <citation type="journal article" date="1995" name="FEBS Lett.">
        <title>T cell receptor-mediated stimulation of mouse thymocytes induces up-regulation of the GM2/GD2 synthase gene.</title>
        <authorList>
            <person name="Takamiya K."/>
            <person name="Yamamoto A."/>
            <person name="Yamashiro S."/>
            <person name="Furukawa K."/>
            <person name="Haraguchi M."/>
            <person name="Okada M."/>
            <person name="Ikeda T."/>
            <person name="Shiku H."/>
            <person name="Furukawa K."/>
        </authorList>
    </citation>
    <scope>NUCLEOTIDE SEQUENCE [MRNA]</scope>
</reference>
<reference key="2">
    <citation type="journal article" date="1995" name="Genomics">
        <title>Beta-1,4-N-acetylgalactosaminyltransferase involved in ganglioside synthesis: cDNA sequence, expression, and chromosome mapping of the mouse gene.</title>
        <authorList>
            <person name="Sango K."/>
            <person name="Johnson O.N."/>
            <person name="Kozak C.A."/>
            <person name="Proia R.L."/>
        </authorList>
    </citation>
    <scope>NUCLEOTIDE SEQUENCE [MRNA]</scope>
    <scope>TISSUE SPECIFICITY</scope>
    <scope>DEVELOPMENTAL STAGE</scope>
    <source>
        <strain>BALB/cJ</strain>
        <tissue>Neonatal brain</tissue>
    </source>
</reference>
<reference key="3">
    <citation type="journal article" date="2004" name="Genome Res.">
        <title>The status, quality, and expansion of the NIH full-length cDNA project: the Mammalian Gene Collection (MGC).</title>
        <authorList>
            <consortium name="The MGC Project Team"/>
        </authorList>
    </citation>
    <scope>NUCLEOTIDE SEQUENCE [LARGE SCALE MRNA]</scope>
    <source>
        <strain>129</strain>
        <tissue>Mammary gland</tissue>
    </source>
</reference>
<reference key="4">
    <citation type="journal article" date="1996" name="Proc. Natl. Acad. Sci. U.S.A.">
        <title>Mice with disrupted GM2/GD2 synthase gene lack complex gangliosides but exhibit only subtle defects in their nervous system.</title>
        <authorList>
            <person name="Takamiya K."/>
            <person name="Yamamoto A."/>
            <person name="Furukawa K."/>
            <person name="Yamashiro S."/>
            <person name="Shin M."/>
            <person name="Okada M."/>
            <person name="Fukumoto S."/>
            <person name="Haraguchi M."/>
            <person name="Takeda N."/>
            <person name="Fujimura K."/>
            <person name="Sakae M."/>
            <person name="Kishikawa M."/>
            <person name="Shiku H."/>
            <person name="Furukawa K."/>
            <person name="Aizawa S."/>
        </authorList>
    </citation>
    <scope>DISRUPTION PHENOTYPE</scope>
    <scope>FUNCTION</scope>
    <scope>CATALYTIC ACTIVITY</scope>
    <scope>PATHWAY</scope>
</reference>
<reference key="5">
    <citation type="journal article" date="2005" name="Exp. Neurol.">
        <title>Myelin-associated glycoprotein and complementary axonal ligands, gangliosides, mediate axon stability in the CNS and PNS: neuropathology and behavioral deficits in single- and double-null mice.</title>
        <authorList>
            <person name="Pan B."/>
            <person name="Fromholt S.E."/>
            <person name="Hess E.J."/>
            <person name="Crawford T.O."/>
            <person name="Griffin J.W."/>
            <person name="Sheikh K.A."/>
            <person name="Schnaar R.L."/>
        </authorList>
    </citation>
    <scope>DISRUPTION PHENOTYPE</scope>
</reference>
<reference key="6">
    <citation type="journal article" date="2010" name="Cell">
        <title>A tissue-specific atlas of mouse protein phosphorylation and expression.</title>
        <authorList>
            <person name="Huttlin E.L."/>
            <person name="Jedrychowski M.P."/>
            <person name="Elias J.E."/>
            <person name="Goswami T."/>
            <person name="Rad R."/>
            <person name="Beausoleil S.A."/>
            <person name="Villen J."/>
            <person name="Haas W."/>
            <person name="Sowa M.E."/>
            <person name="Gygi S.P."/>
        </authorList>
    </citation>
    <scope>IDENTIFICATION BY MASS SPECTROMETRY [LARGE SCALE ANALYSIS]</scope>
    <source>
        <tissue>Liver</tissue>
        <tissue>Spleen</tissue>
    </source>
</reference>
<reference key="7">
    <citation type="journal article" date="2011" name="PLoS Pathog.">
        <title>Botulinum neurotoxin D uses synaptic vesicle protein SV2 and gangliosides as receptors.</title>
        <authorList>
            <person name="Peng L."/>
            <person name="Tepp W.H."/>
            <person name="Johnson E.A."/>
            <person name="Dong M."/>
        </authorList>
    </citation>
    <scope>DISRUPTION PHENOTYPE</scope>
</reference>
<dbReference type="EC" id="2.4.1.92" evidence="8"/>
<dbReference type="EMBL" id="L25885">
    <property type="protein sequence ID" value="AAA65027.1"/>
    <property type="molecule type" value="mRNA"/>
</dbReference>
<dbReference type="EMBL" id="U18975">
    <property type="protein sequence ID" value="AAA85496.1"/>
    <property type="molecule type" value="mRNA"/>
</dbReference>
<dbReference type="EMBL" id="BC036996">
    <property type="protein sequence ID" value="AAH36996.1"/>
    <property type="molecule type" value="mRNA"/>
</dbReference>
<dbReference type="EMBL" id="BC057199">
    <property type="protein sequence ID" value="AAH57199.1"/>
    <property type="molecule type" value="mRNA"/>
</dbReference>
<dbReference type="CCDS" id="CCDS24230.1"/>
<dbReference type="PIR" id="S78529">
    <property type="entry name" value="S78529"/>
</dbReference>
<dbReference type="RefSeq" id="NP_001415400.1">
    <property type="nucleotide sequence ID" value="NM_001428471.1"/>
</dbReference>
<dbReference type="RefSeq" id="NP_001415401.1">
    <property type="nucleotide sequence ID" value="NM_001428472.1"/>
</dbReference>
<dbReference type="RefSeq" id="NP_032106.1">
    <property type="nucleotide sequence ID" value="NM_008080.6"/>
</dbReference>
<dbReference type="RefSeq" id="NP_082015.2">
    <property type="nucleotide sequence ID" value="NM_027739.2"/>
</dbReference>
<dbReference type="RefSeq" id="XP_006513282.1">
    <property type="nucleotide sequence ID" value="XM_006513219.3"/>
</dbReference>
<dbReference type="BioGRID" id="199818">
    <property type="interactions" value="1"/>
</dbReference>
<dbReference type="FunCoup" id="Q09200">
    <property type="interactions" value="1230"/>
</dbReference>
<dbReference type="IntAct" id="Q09200">
    <property type="interactions" value="1"/>
</dbReference>
<dbReference type="STRING" id="10090.ENSMUSP00000006914"/>
<dbReference type="CAZy" id="GT12">
    <property type="family name" value="Glycosyltransferase Family 12"/>
</dbReference>
<dbReference type="GlyCosmos" id="Q09200">
    <property type="glycosylation" value="3 sites, No reported glycans"/>
</dbReference>
<dbReference type="GlyGen" id="Q09200">
    <property type="glycosylation" value="4 sites, 2 N-linked glycans (2 sites)"/>
</dbReference>
<dbReference type="iPTMnet" id="Q09200"/>
<dbReference type="PhosphoSitePlus" id="Q09200"/>
<dbReference type="PaxDb" id="10090-ENSMUSP00000006914"/>
<dbReference type="PeptideAtlas" id="Q09200"/>
<dbReference type="ProteomicsDB" id="273590"/>
<dbReference type="Pumba" id="Q09200"/>
<dbReference type="Antibodypedia" id="2458">
    <property type="antibodies" value="252 antibodies from 30 providers"/>
</dbReference>
<dbReference type="DNASU" id="14421"/>
<dbReference type="Ensembl" id="ENSMUST00000006914.11">
    <property type="protein sequence ID" value="ENSMUSP00000006914.10"/>
    <property type="gene ID" value="ENSMUSG00000006731.11"/>
</dbReference>
<dbReference type="GeneID" id="14421"/>
<dbReference type="KEGG" id="mmu:14421"/>
<dbReference type="UCSC" id="uc007hic.2">
    <property type="organism name" value="mouse"/>
</dbReference>
<dbReference type="AGR" id="MGI:1342057"/>
<dbReference type="CTD" id="2583"/>
<dbReference type="MGI" id="MGI:1342057">
    <property type="gene designation" value="B4galnt1"/>
</dbReference>
<dbReference type="VEuPathDB" id="HostDB:ENSMUSG00000006731"/>
<dbReference type="eggNOG" id="ENOG502QTK7">
    <property type="taxonomic scope" value="Eukaryota"/>
</dbReference>
<dbReference type="GeneTree" id="ENSGT00390000006679"/>
<dbReference type="HOGENOM" id="CLU_036051_0_0_1"/>
<dbReference type="InParanoid" id="Q09200"/>
<dbReference type="OMA" id="REYQAFQ"/>
<dbReference type="OrthoDB" id="2139606at2759"/>
<dbReference type="PhylomeDB" id="Q09200"/>
<dbReference type="TreeFam" id="TF332297"/>
<dbReference type="BRENDA" id="2.4.1.92">
    <property type="organism ID" value="3474"/>
</dbReference>
<dbReference type="Reactome" id="R-MMU-9840309">
    <property type="pathway name" value="Glycosphingolipid biosynthesis"/>
</dbReference>
<dbReference type="BioGRID-ORCS" id="14421">
    <property type="hits" value="6 hits in 82 CRISPR screens"/>
</dbReference>
<dbReference type="ChiTaRS" id="B4galnt1">
    <property type="organism name" value="mouse"/>
</dbReference>
<dbReference type="PRO" id="PR:Q09200"/>
<dbReference type="Proteomes" id="UP000000589">
    <property type="component" value="Chromosome 10"/>
</dbReference>
<dbReference type="RNAct" id="Q09200">
    <property type="molecule type" value="protein"/>
</dbReference>
<dbReference type="Bgee" id="ENSMUSG00000006731">
    <property type="expression patterns" value="Expressed in small intestine Peyer's patch and 197 other cell types or tissues"/>
</dbReference>
<dbReference type="ExpressionAtlas" id="Q09200">
    <property type="expression patterns" value="baseline and differential"/>
</dbReference>
<dbReference type="GO" id="GO:0005794">
    <property type="term" value="C:Golgi apparatus"/>
    <property type="evidence" value="ECO:0000250"/>
    <property type="project" value="UniProtKB"/>
</dbReference>
<dbReference type="GO" id="GO:0000139">
    <property type="term" value="C:Golgi membrane"/>
    <property type="evidence" value="ECO:0000250"/>
    <property type="project" value="UniProtKB"/>
</dbReference>
<dbReference type="GO" id="GO:0003947">
    <property type="term" value="F:(N-acetylneuraminyl)-galactosylglucosylceramide N-acetylgalactosaminyltransferase activity"/>
    <property type="evidence" value="ECO:0000315"/>
    <property type="project" value="UniProtKB"/>
</dbReference>
<dbReference type="GO" id="GO:0008376">
    <property type="term" value="F:acetylgalactosaminyltransferase activity"/>
    <property type="evidence" value="ECO:0000250"/>
    <property type="project" value="UniProtKB"/>
</dbReference>
<dbReference type="GO" id="GO:0008340">
    <property type="term" value="P:determination of adult lifespan"/>
    <property type="evidence" value="ECO:0000316"/>
    <property type="project" value="MGI"/>
</dbReference>
<dbReference type="GO" id="GO:0001574">
    <property type="term" value="P:ganglioside biosynthetic process"/>
    <property type="evidence" value="ECO:0000315"/>
    <property type="project" value="UniProtKB"/>
</dbReference>
<dbReference type="GO" id="GO:0006688">
    <property type="term" value="P:glycosphingolipid biosynthetic process"/>
    <property type="evidence" value="ECO:0000250"/>
    <property type="project" value="UniProtKB"/>
</dbReference>
<dbReference type="GO" id="GO:0006687">
    <property type="term" value="P:glycosphingolipid metabolic process"/>
    <property type="evidence" value="ECO:0000315"/>
    <property type="project" value="MGI"/>
</dbReference>
<dbReference type="GO" id="GO:0060173">
    <property type="term" value="P:limb development"/>
    <property type="evidence" value="ECO:0000316"/>
    <property type="project" value="MGI"/>
</dbReference>
<dbReference type="GO" id="GO:0030259">
    <property type="term" value="P:lipid glycosylation"/>
    <property type="evidence" value="ECO:0007669"/>
    <property type="project" value="InterPro"/>
</dbReference>
<dbReference type="GO" id="GO:0019915">
    <property type="term" value="P:lipid storage"/>
    <property type="evidence" value="ECO:0000316"/>
    <property type="project" value="MGI"/>
</dbReference>
<dbReference type="GO" id="GO:0061744">
    <property type="term" value="P:motor behavior"/>
    <property type="evidence" value="ECO:0000316"/>
    <property type="project" value="MGI"/>
</dbReference>
<dbReference type="GO" id="GO:0021675">
    <property type="term" value="P:nerve development"/>
    <property type="evidence" value="ECO:0000316"/>
    <property type="project" value="MGI"/>
</dbReference>
<dbReference type="GO" id="GO:0007283">
    <property type="term" value="P:spermatogenesis"/>
    <property type="evidence" value="ECO:0000315"/>
    <property type="project" value="MGI"/>
</dbReference>
<dbReference type="GO" id="GO:0007033">
    <property type="term" value="P:vacuole organization"/>
    <property type="evidence" value="ECO:0000316"/>
    <property type="project" value="MGI"/>
</dbReference>
<dbReference type="CDD" id="cd00761">
    <property type="entry name" value="Glyco_tranf_GTA_type"/>
    <property type="match status" value="1"/>
</dbReference>
<dbReference type="FunFam" id="3.90.550.10:FF:000076">
    <property type="entry name" value="Beta-1,4 N-acetylgalactosaminyltransferase"/>
    <property type="match status" value="1"/>
</dbReference>
<dbReference type="Gene3D" id="3.90.550.10">
    <property type="entry name" value="Spore Coat Polysaccharide Biosynthesis Protein SpsA, Chain A"/>
    <property type="match status" value="1"/>
</dbReference>
<dbReference type="InterPro" id="IPR001173">
    <property type="entry name" value="Glyco_trans_2-like"/>
</dbReference>
<dbReference type="InterPro" id="IPR011143">
    <property type="entry name" value="GM2_synthase"/>
</dbReference>
<dbReference type="InterPro" id="IPR029044">
    <property type="entry name" value="Nucleotide-diphossugar_trans"/>
</dbReference>
<dbReference type="PANTHER" id="PTHR15046:SF1">
    <property type="entry name" value="BETA-1,4 N-ACETYLGALACTOSAMINYLTRANSFERASE 1"/>
    <property type="match status" value="1"/>
</dbReference>
<dbReference type="PANTHER" id="PTHR15046">
    <property type="entry name" value="GLYCO_TRANS_2-LIKE DOMAIN-CONTAINING PROTEIN"/>
    <property type="match status" value="1"/>
</dbReference>
<dbReference type="Pfam" id="PF00535">
    <property type="entry name" value="Glycos_transf_2"/>
    <property type="match status" value="1"/>
</dbReference>
<dbReference type="PIRSF" id="PIRSF000474">
    <property type="entry name" value="GM2_GD2_synthase"/>
    <property type="match status" value="1"/>
</dbReference>
<dbReference type="SUPFAM" id="SSF53448">
    <property type="entry name" value="Nucleotide-diphospho-sugar transferases"/>
    <property type="match status" value="1"/>
</dbReference>
<comment type="function">
    <text evidence="8">Involved in the biosynthesis of gangliosides GM2, GD2 and GA2.</text>
</comment>
<comment type="function">
    <text evidence="3">Involved in the biosynthesis of gangliosides GM2, GD2, GT2 and GA2 from GM3, GD3, GT3 and GA3, respectively.</text>
</comment>
<comment type="catalytic activity">
    <reaction evidence="8">
        <text>a ganglioside GM3 (d18:1(4E)) + UDP-N-acetyl-alpha-D-galactosamine = a ganglioside GM2 (d18:1(4E)) + UDP + H(+)</text>
        <dbReference type="Rhea" id="RHEA:12588"/>
        <dbReference type="ChEBI" id="CHEBI:15378"/>
        <dbReference type="ChEBI" id="CHEBI:58223"/>
        <dbReference type="ChEBI" id="CHEBI:60065"/>
        <dbReference type="ChEBI" id="CHEBI:67138"/>
        <dbReference type="ChEBI" id="CHEBI:71502"/>
        <dbReference type="EC" id="2.4.1.92"/>
    </reaction>
    <physiologicalReaction direction="left-to-right" evidence="11">
        <dbReference type="Rhea" id="RHEA:12589"/>
    </physiologicalReaction>
</comment>
<comment type="catalytic activity">
    <reaction evidence="2 3">
        <text>a ganglioside GD3 (d18:1(4E)) + UDP-N-acetyl-alpha-D-galactosamine = a ganglioside GD2 (d18:1(4E)) + UDP + H(+)</text>
        <dbReference type="Rhea" id="RHEA:41816"/>
        <dbReference type="ChEBI" id="CHEBI:15378"/>
        <dbReference type="ChEBI" id="CHEBI:58223"/>
        <dbReference type="ChEBI" id="CHEBI:67138"/>
        <dbReference type="ChEBI" id="CHEBI:78436"/>
        <dbReference type="ChEBI" id="CHEBI:78542"/>
    </reaction>
    <physiologicalReaction direction="left-to-right" evidence="2 3">
        <dbReference type="Rhea" id="RHEA:41817"/>
    </physiologicalReaction>
</comment>
<comment type="catalytic activity">
    <reaction evidence="2 3">
        <text>a ganglioside GM3 + UDP-N-acetyl-alpha-D-galactosamine = a ganglioside GM2 + UDP + H(+)</text>
        <dbReference type="Rhea" id="RHEA:43268"/>
        <dbReference type="ChEBI" id="CHEBI:15378"/>
        <dbReference type="ChEBI" id="CHEBI:58223"/>
        <dbReference type="ChEBI" id="CHEBI:67138"/>
        <dbReference type="ChEBI" id="CHEBI:79210"/>
        <dbReference type="ChEBI" id="CHEBI:79218"/>
    </reaction>
    <physiologicalReaction direction="left-to-right" evidence="2 3">
        <dbReference type="Rhea" id="RHEA:43269"/>
    </physiologicalReaction>
</comment>
<comment type="catalytic activity">
    <reaction evidence="2 3">
        <text>a ganglioside GD3 + UDP-N-acetyl-alpha-D-galactosamine = a ganglioside GD2 + UDP + H(+)</text>
        <dbReference type="Rhea" id="RHEA:43272"/>
        <dbReference type="ChEBI" id="CHEBI:15378"/>
        <dbReference type="ChEBI" id="CHEBI:58223"/>
        <dbReference type="ChEBI" id="CHEBI:67138"/>
        <dbReference type="ChEBI" id="CHEBI:79214"/>
        <dbReference type="ChEBI" id="CHEBI:79220"/>
    </reaction>
    <physiologicalReaction direction="left-to-right" evidence="2 3">
        <dbReference type="Rhea" id="RHEA:43273"/>
    </physiologicalReaction>
</comment>
<comment type="catalytic activity">
    <reaction evidence="3">
        <text>a ganglioside GD1a + UDP-N-acetyl-alpha-D-galactosamine = a ganglioside GalNAc-GD1a + UDP + H(+)</text>
        <dbReference type="Rhea" id="RHEA:43276"/>
        <dbReference type="ChEBI" id="CHEBI:15378"/>
        <dbReference type="ChEBI" id="CHEBI:58223"/>
        <dbReference type="ChEBI" id="CHEBI:67138"/>
        <dbReference type="ChEBI" id="CHEBI:82637"/>
        <dbReference type="ChEBI" id="CHEBI:82945"/>
    </reaction>
    <physiologicalReaction direction="left-to-right" evidence="3">
        <dbReference type="Rhea" id="RHEA:43277"/>
    </physiologicalReaction>
</comment>
<comment type="catalytic activity">
    <reaction evidence="3">
        <text>a ganglioside GT3 (d18:1(4E)) + UDP-N-acetyl-alpha-D-galactosamine = a ganglioside GT2 (d18:1(4E)) + UDP + H(+)</text>
        <dbReference type="Rhea" id="RHEA:47580"/>
        <dbReference type="ChEBI" id="CHEBI:15378"/>
        <dbReference type="ChEBI" id="CHEBI:58223"/>
        <dbReference type="ChEBI" id="CHEBI:67138"/>
        <dbReference type="ChEBI" id="CHEBI:78438"/>
        <dbReference type="ChEBI" id="CHEBI:87788"/>
    </reaction>
    <physiologicalReaction direction="left-to-right" evidence="3">
        <dbReference type="Rhea" id="RHEA:47581"/>
    </physiologicalReaction>
</comment>
<comment type="catalytic activity">
    <reaction evidence="2 3">
        <text>a beta-D-Gal-(1-&gt;4)-beta-D-Glc-(1&lt;-&gt;1)-Cer(d18:1(4E)) + UDP-N-acetyl-alpha-D-galactosamine = a ganglioside GA2 (d18:1(4E)) + UDP + H(+)</text>
        <dbReference type="Rhea" id="RHEA:47564"/>
        <dbReference type="ChEBI" id="CHEBI:15378"/>
        <dbReference type="ChEBI" id="CHEBI:17950"/>
        <dbReference type="ChEBI" id="CHEBI:27731"/>
        <dbReference type="ChEBI" id="CHEBI:58223"/>
        <dbReference type="ChEBI" id="CHEBI:67138"/>
    </reaction>
    <physiologicalReaction direction="left-to-right" evidence="2 3">
        <dbReference type="Rhea" id="RHEA:47565"/>
    </physiologicalReaction>
</comment>
<comment type="catalytic activity">
    <reaction evidence="3">
        <text>a neolactoside IV(3)-alpha-NeuGc-nLc4Cer + UDP-N-acetyl-alpha-D-galactosamine = a neolactoside IV(4)-beta-GalNAc-IV(3)-alpha-NeuGc-nLc4Cer + UDP + H(+)</text>
        <dbReference type="Rhea" id="RHEA:43300"/>
        <dbReference type="ChEBI" id="CHEBI:15378"/>
        <dbReference type="ChEBI" id="CHEBI:58223"/>
        <dbReference type="ChEBI" id="CHEBI:67138"/>
        <dbReference type="ChEBI" id="CHEBI:82950"/>
        <dbReference type="ChEBI" id="CHEBI:82951"/>
    </reaction>
    <physiologicalReaction direction="left-to-right" evidence="3">
        <dbReference type="Rhea" id="RHEA:43301"/>
    </physiologicalReaction>
</comment>
<comment type="pathway">
    <text evidence="8">Sphingolipid metabolism.</text>
</comment>
<comment type="subunit">
    <text evidence="1">Homodimer; disulfide-linked.</text>
</comment>
<comment type="subcellular location">
    <subcellularLocation>
        <location evidence="3">Golgi apparatus membrane</location>
        <topology evidence="4">Single-pass type II membrane protein</topology>
    </subcellularLocation>
</comment>
<comment type="tissue specificity">
    <text evidence="7">Most abundant in brain, liver, lung, spleen and testis.</text>
</comment>
<comment type="developmental stage">
    <text evidence="7">Highest at day 7 of embryonic development after which it declines to its lowest levels at day 11 before increasing again.</text>
</comment>
<comment type="disruption phenotype">
    <text evidence="5 6 8">No visible phenotype, excepting a slight decrease in neural conduction velocity from the tibial nerve to the somatosensory cortex (PubMed:8855236). Mutant mice display impaired motor coordination and balance (PubMed:15953602). Sciatic nerves from over three month old mutant mice show signs of Wallerian degeneration, with redundant myelin, degeneration of myelinated fibers, axon dysmyelination, and an apparent decrease in the diameter of myelinated axons (PubMed:15953602). The distances between neurofilaments in myelinated axons from over 3 month old mice are shorter than normal (PubMed:15953602). Mice are less sensitive to C.botulinum neurotoxin type C (BoNT/C), C.botulinum neurotoxin type D (BoNT/D, botD) and C.botulinum neurotoxin type F (BoNT/F, botF) (PubMed:21483489).</text>
</comment>
<comment type="similarity">
    <text evidence="10">Belongs to the glycosyltransferase 2 family.</text>
</comment>
<comment type="online information" name="Functional Glycomics Gateway - GTase">
    <link uri="http://www.functionalglycomics.org/glycomics/molecule/jsp/glycoEnzyme/viewGlycoEnzyme.jsp?gbpId=gt_mou_506"/>
    <text>Beta-1,4 N-acetylgalactosaminyltransferase 1</text>
</comment>
<name>B4GN1_MOUSE</name>
<keyword id="KW-1015">Disulfide bond</keyword>
<keyword id="KW-0325">Glycoprotein</keyword>
<keyword id="KW-0328">Glycosyltransferase</keyword>
<keyword id="KW-0333">Golgi apparatus</keyword>
<keyword id="KW-0443">Lipid metabolism</keyword>
<keyword id="KW-0472">Membrane</keyword>
<keyword id="KW-1185">Reference proteome</keyword>
<keyword id="KW-0735">Signal-anchor</keyword>
<keyword id="KW-0746">Sphingolipid metabolism</keyword>
<keyword id="KW-0808">Transferase</keyword>
<keyword id="KW-0812">Transmembrane</keyword>
<keyword id="KW-1133">Transmembrane helix</keyword>
<organism>
    <name type="scientific">Mus musculus</name>
    <name type="common">Mouse</name>
    <dbReference type="NCBI Taxonomy" id="10090"/>
    <lineage>
        <taxon>Eukaryota</taxon>
        <taxon>Metazoa</taxon>
        <taxon>Chordata</taxon>
        <taxon>Craniata</taxon>
        <taxon>Vertebrata</taxon>
        <taxon>Euteleostomi</taxon>
        <taxon>Mammalia</taxon>
        <taxon>Eutheria</taxon>
        <taxon>Euarchontoglires</taxon>
        <taxon>Glires</taxon>
        <taxon>Rodentia</taxon>
        <taxon>Myomorpha</taxon>
        <taxon>Muroidea</taxon>
        <taxon>Muridae</taxon>
        <taxon>Murinae</taxon>
        <taxon>Mus</taxon>
        <taxon>Mus</taxon>
    </lineage>
</organism>
<feature type="chain" id="PRO_0000059101" description="Beta-1,4 N-acetylgalactosaminyltransferase 1">
    <location>
        <begin position="1"/>
        <end position="533"/>
    </location>
</feature>
<feature type="topological domain" description="Cytoplasmic" evidence="4">
    <location>
        <begin position="1"/>
        <end position="7"/>
    </location>
</feature>
<feature type="transmembrane region" description="Helical; Signal-anchor for type II membrane protein" evidence="4">
    <location>
        <begin position="8"/>
        <end position="25"/>
    </location>
</feature>
<feature type="topological domain" description="Lumenal" evidence="4">
    <location>
        <begin position="26"/>
        <end position="533"/>
    </location>
</feature>
<feature type="glycosylation site" description="N-linked (GlcNAc...) asparagine" evidence="4">
    <location>
        <position position="79"/>
    </location>
</feature>
<feature type="glycosylation site" description="N-linked (GlcNAc...) asparagine" evidence="4">
    <location>
        <position position="179"/>
    </location>
</feature>
<feature type="glycosylation site" description="N-linked (GlcNAc...) asparagine" evidence="4">
    <location>
        <position position="274"/>
    </location>
</feature>
<feature type="disulfide bond" description="Interchain (with C-412)" evidence="2">
    <location>
        <position position="80"/>
    </location>
</feature>
<feature type="disulfide bond" description="Interchain (with C-529)" evidence="2">
    <location>
        <position position="82"/>
    </location>
</feature>
<feature type="disulfide bond" description="Interchain (with C-80)" evidence="2">
    <location>
        <position position="412"/>
    </location>
</feature>
<feature type="disulfide bond" evidence="2">
    <location>
        <begin position="429"/>
        <end position="476"/>
    </location>
</feature>
<feature type="disulfide bond" description="Interchain (with C-82)" evidence="2">
    <location>
        <position position="529"/>
    </location>
</feature>
<feature type="sequence conflict" description="In Ref. 2; AAA85496." evidence="10" ref="2">
    <original>G</original>
    <variation>E</variation>
    <location>
        <position position="73"/>
    </location>
</feature>